<comment type="function">
    <text evidence="1">Catalyzes the initial step of the lipid cycle reactions in the biosynthesis of the cell wall peptidoglycan: transfers peptidoglycan precursor phospho-MurNAc-pentapeptide from UDP-MurNAc-pentapeptide onto the lipid carrier undecaprenyl phosphate, yielding undecaprenyl-pyrophosphoryl-MurNAc-pentapeptide, known as lipid I.</text>
</comment>
<comment type="catalytic activity">
    <reaction evidence="1">
        <text>UDP-N-acetyl-alpha-D-muramoyl-L-alanyl-gamma-D-glutamyl-meso-2,6-diaminopimeloyl-D-alanyl-D-alanine + di-trans,octa-cis-undecaprenyl phosphate = di-trans,octa-cis-undecaprenyl diphospho-N-acetyl-alpha-D-muramoyl-L-alanyl-D-glutamyl-meso-2,6-diaminopimeloyl-D-alanyl-D-alanine + UMP</text>
        <dbReference type="Rhea" id="RHEA:28386"/>
        <dbReference type="ChEBI" id="CHEBI:57865"/>
        <dbReference type="ChEBI" id="CHEBI:60392"/>
        <dbReference type="ChEBI" id="CHEBI:61386"/>
        <dbReference type="ChEBI" id="CHEBI:61387"/>
        <dbReference type="EC" id="2.7.8.13"/>
    </reaction>
</comment>
<comment type="cofactor">
    <cofactor evidence="1">
        <name>Mg(2+)</name>
        <dbReference type="ChEBI" id="CHEBI:18420"/>
    </cofactor>
</comment>
<comment type="pathway">
    <text evidence="1">Cell wall biogenesis; peptidoglycan biosynthesis.</text>
</comment>
<comment type="subcellular location">
    <subcellularLocation>
        <location evidence="1">Cell membrane</location>
        <topology evidence="1">Multi-pass membrane protein</topology>
    </subcellularLocation>
</comment>
<comment type="similarity">
    <text evidence="1">Belongs to the glycosyltransferase 4 family. MraY subfamily.</text>
</comment>
<evidence type="ECO:0000255" key="1">
    <source>
        <dbReference type="HAMAP-Rule" id="MF_00038"/>
    </source>
</evidence>
<feature type="chain" id="PRO_1000090612" description="Phospho-N-acetylmuramoyl-pentapeptide-transferase">
    <location>
        <begin position="1"/>
        <end position="324"/>
    </location>
</feature>
<feature type="transmembrane region" description="Helical" evidence="1">
    <location>
        <begin position="13"/>
        <end position="33"/>
    </location>
</feature>
<feature type="transmembrane region" description="Helical" evidence="1">
    <location>
        <begin position="59"/>
        <end position="79"/>
    </location>
</feature>
<feature type="transmembrane region" description="Helical" evidence="1">
    <location>
        <begin position="85"/>
        <end position="105"/>
    </location>
</feature>
<feature type="transmembrane region" description="Helical" evidence="1">
    <location>
        <begin position="121"/>
        <end position="141"/>
    </location>
</feature>
<feature type="transmembrane region" description="Helical" evidence="1">
    <location>
        <begin position="143"/>
        <end position="163"/>
    </location>
</feature>
<feature type="transmembrane region" description="Helical" evidence="1">
    <location>
        <begin position="179"/>
        <end position="199"/>
    </location>
</feature>
<feature type="transmembrane region" description="Helical" evidence="1">
    <location>
        <begin position="201"/>
        <end position="221"/>
    </location>
</feature>
<feature type="transmembrane region" description="Helical" evidence="1">
    <location>
        <begin position="243"/>
        <end position="263"/>
    </location>
</feature>
<feature type="transmembrane region" description="Helical" evidence="1">
    <location>
        <begin position="303"/>
        <end position="323"/>
    </location>
</feature>
<reference key="1">
    <citation type="submission" date="2008-05" db="EMBL/GenBank/DDBJ databases">
        <title>Complete genome sequence of Clostridium botulinum E3 str. Alaska E43.</title>
        <authorList>
            <person name="Brinkac L.M."/>
            <person name="Brown J.L."/>
            <person name="Bruce D."/>
            <person name="Detter C."/>
            <person name="Munk C."/>
            <person name="Smith L.A."/>
            <person name="Smith T.J."/>
            <person name="Sutton G."/>
            <person name="Brettin T.S."/>
        </authorList>
    </citation>
    <scope>NUCLEOTIDE SEQUENCE [LARGE SCALE GENOMIC DNA]</scope>
    <source>
        <strain>Alaska E43 / Type E3</strain>
    </source>
</reference>
<sequence length="324" mass="35260">MGDTIKELLNPTVLSALLMGFAFSMVLGPIFIPMLHKLKFGQNIRKDGPQSHLKKSGTPTMGGLIFFISVTVTMLIIGYKPTDEGMVVLYSLIAFGIIGFLDDILKIIHRDNLGLRAYQKMILLLLFSIALAYYGYTNIGTDIIIPFMNSKLNLGIFYIPLVVVYYAATTNAVNLTDGIDGLASSVTVIVLTFFAIVGFKTGHYQVGVFSIALAGALLGFLRYNAFPAKIFMGDTGSLALGGAIATIALILKMPLFIIIVGGIYVVETLSVIIQVTSFKTTGKRVFKMAPIHHHFEQCGWSEVKLVTVFSIITLILCIIGFIAL</sequence>
<keyword id="KW-0131">Cell cycle</keyword>
<keyword id="KW-0132">Cell division</keyword>
<keyword id="KW-1003">Cell membrane</keyword>
<keyword id="KW-0133">Cell shape</keyword>
<keyword id="KW-0961">Cell wall biogenesis/degradation</keyword>
<keyword id="KW-0460">Magnesium</keyword>
<keyword id="KW-0472">Membrane</keyword>
<keyword id="KW-0479">Metal-binding</keyword>
<keyword id="KW-0573">Peptidoglycan synthesis</keyword>
<keyword id="KW-0808">Transferase</keyword>
<keyword id="KW-0812">Transmembrane</keyword>
<keyword id="KW-1133">Transmembrane helix</keyword>
<organism>
    <name type="scientific">Clostridium botulinum (strain Alaska E43 / Type E3)</name>
    <dbReference type="NCBI Taxonomy" id="508767"/>
    <lineage>
        <taxon>Bacteria</taxon>
        <taxon>Bacillati</taxon>
        <taxon>Bacillota</taxon>
        <taxon>Clostridia</taxon>
        <taxon>Eubacteriales</taxon>
        <taxon>Clostridiaceae</taxon>
        <taxon>Clostridium</taxon>
    </lineage>
</organism>
<name>MRAY_CLOBA</name>
<dbReference type="EC" id="2.7.8.13" evidence="1"/>
<dbReference type="EMBL" id="CP001078">
    <property type="protein sequence ID" value="ACD53296.1"/>
    <property type="molecule type" value="Genomic_DNA"/>
</dbReference>
<dbReference type="RefSeq" id="WP_012451231.1">
    <property type="nucleotide sequence ID" value="NC_010723.1"/>
</dbReference>
<dbReference type="SMR" id="B2V4V5"/>
<dbReference type="KEGG" id="cbt:CLH_2208"/>
<dbReference type="HOGENOM" id="CLU_023982_0_1_9"/>
<dbReference type="UniPathway" id="UPA00219"/>
<dbReference type="GO" id="GO:0005886">
    <property type="term" value="C:plasma membrane"/>
    <property type="evidence" value="ECO:0007669"/>
    <property type="project" value="UniProtKB-SubCell"/>
</dbReference>
<dbReference type="GO" id="GO:0046872">
    <property type="term" value="F:metal ion binding"/>
    <property type="evidence" value="ECO:0007669"/>
    <property type="project" value="UniProtKB-KW"/>
</dbReference>
<dbReference type="GO" id="GO:0008963">
    <property type="term" value="F:phospho-N-acetylmuramoyl-pentapeptide-transferase activity"/>
    <property type="evidence" value="ECO:0007669"/>
    <property type="project" value="UniProtKB-UniRule"/>
</dbReference>
<dbReference type="GO" id="GO:0051992">
    <property type="term" value="F:UDP-N-acetylmuramoyl-L-alanyl-D-glutamyl-meso-2,6-diaminopimelyl-D-alanyl-D-alanine:undecaprenyl-phosphate transferase activity"/>
    <property type="evidence" value="ECO:0007669"/>
    <property type="project" value="RHEA"/>
</dbReference>
<dbReference type="GO" id="GO:0051301">
    <property type="term" value="P:cell division"/>
    <property type="evidence" value="ECO:0007669"/>
    <property type="project" value="UniProtKB-KW"/>
</dbReference>
<dbReference type="GO" id="GO:0071555">
    <property type="term" value="P:cell wall organization"/>
    <property type="evidence" value="ECO:0007669"/>
    <property type="project" value="UniProtKB-KW"/>
</dbReference>
<dbReference type="GO" id="GO:0009252">
    <property type="term" value="P:peptidoglycan biosynthetic process"/>
    <property type="evidence" value="ECO:0007669"/>
    <property type="project" value="UniProtKB-UniRule"/>
</dbReference>
<dbReference type="GO" id="GO:0008360">
    <property type="term" value="P:regulation of cell shape"/>
    <property type="evidence" value="ECO:0007669"/>
    <property type="project" value="UniProtKB-KW"/>
</dbReference>
<dbReference type="CDD" id="cd06852">
    <property type="entry name" value="GT_MraY"/>
    <property type="match status" value="1"/>
</dbReference>
<dbReference type="HAMAP" id="MF_00038">
    <property type="entry name" value="MraY"/>
    <property type="match status" value="1"/>
</dbReference>
<dbReference type="InterPro" id="IPR000715">
    <property type="entry name" value="Glycosyl_transferase_4"/>
</dbReference>
<dbReference type="InterPro" id="IPR003524">
    <property type="entry name" value="PNAcMuramoyl-5peptid_Trfase"/>
</dbReference>
<dbReference type="InterPro" id="IPR018480">
    <property type="entry name" value="PNAcMuramoyl-5peptid_Trfase_CS"/>
</dbReference>
<dbReference type="NCBIfam" id="TIGR00445">
    <property type="entry name" value="mraY"/>
    <property type="match status" value="1"/>
</dbReference>
<dbReference type="PANTHER" id="PTHR22926">
    <property type="entry name" value="PHOSPHO-N-ACETYLMURAMOYL-PENTAPEPTIDE-TRANSFERASE"/>
    <property type="match status" value="1"/>
</dbReference>
<dbReference type="PANTHER" id="PTHR22926:SF5">
    <property type="entry name" value="PHOSPHO-N-ACETYLMURAMOYL-PENTAPEPTIDE-TRANSFERASE HOMOLOG"/>
    <property type="match status" value="1"/>
</dbReference>
<dbReference type="Pfam" id="PF00953">
    <property type="entry name" value="Glycos_transf_4"/>
    <property type="match status" value="1"/>
</dbReference>
<dbReference type="Pfam" id="PF10555">
    <property type="entry name" value="MraY_sig1"/>
    <property type="match status" value="1"/>
</dbReference>
<dbReference type="PROSITE" id="PS01347">
    <property type="entry name" value="MRAY_1"/>
    <property type="match status" value="1"/>
</dbReference>
<dbReference type="PROSITE" id="PS01348">
    <property type="entry name" value="MRAY_2"/>
    <property type="match status" value="1"/>
</dbReference>
<protein>
    <recommendedName>
        <fullName evidence="1">Phospho-N-acetylmuramoyl-pentapeptide-transferase</fullName>
        <ecNumber evidence="1">2.7.8.13</ecNumber>
    </recommendedName>
    <alternativeName>
        <fullName evidence="1">UDP-MurNAc-pentapeptide phosphotransferase</fullName>
    </alternativeName>
</protein>
<accession>B2V4V5</accession>
<proteinExistence type="inferred from homology"/>
<gene>
    <name evidence="1" type="primary">mraY</name>
    <name type="ordered locus">CLH_2208</name>
</gene>